<comment type="function">
    <text evidence="2 3">Plays a major role in assembly, budding and uncoating of virion after membrane fusion. Completely covers the ribonucleoprotein coil and keep it in condensed bullet-shaped form. Inhibits viral transcription and stimulates replication. Plays a major role in early induction of TRAIL-mediated apoptosis in infected neurons (By similarity). Inhibits the integrated stress response (ISR) in the infected cell by blocking the formation of stress granules (By similarity).</text>
</comment>
<comment type="subunit">
    <text evidence="2">Homomultimer. Interacts with nucleoprotein and with the cytoplasmic domain of glycoprotein. Interacts with host ATP6V1A; this interaction plays an important role in virion uncoating after viral entry.</text>
</comment>
<comment type="subcellular location">
    <subcellularLocation>
        <location evidence="2">Virion membrane</location>
        <topology evidence="2">Peripheral membrane protein</topology>
    </subcellularLocation>
    <subcellularLocation>
        <location evidence="2">Host endomembrane system</location>
        <topology evidence="2">Peripheral membrane protein</topology>
    </subcellularLocation>
    <subcellularLocation>
        <location evidence="2">Host cytoplasm</location>
    </subcellularLocation>
</comment>
<comment type="domain">
    <text evidence="5">Late-budding domains (L domains) are short sequence motifs essential for viral particle budding. They recruit proteins of the host ESCRT machinery (Endosomal Sorting Complex Required for Transport) or ESCRT-associated proteins. Matrix protein contains one L domain: a PPXY motif which potentially interacts with the WW domain 3 of NEDD4 E3 ubiquitin ligase (Potential).</text>
</comment>
<comment type="miscellaneous">
    <text evidence="1">Most abundant protein in the virion.</text>
</comment>
<comment type="similarity">
    <text evidence="5">Belongs to the lyssavirus matrix protein family.</text>
</comment>
<gene>
    <name type="primary">M</name>
</gene>
<dbReference type="EMBL" id="DQ875050">
    <property type="protein sequence ID" value="ABI47939.1"/>
    <property type="molecule type" value="Other_RNA"/>
</dbReference>
<dbReference type="SMR" id="Q0GBY2"/>
<dbReference type="Proteomes" id="UP000008650">
    <property type="component" value="Genome"/>
</dbReference>
<dbReference type="GO" id="GO:0030430">
    <property type="term" value="C:host cell cytoplasm"/>
    <property type="evidence" value="ECO:0007669"/>
    <property type="project" value="UniProtKB-SubCell"/>
</dbReference>
<dbReference type="GO" id="GO:0033645">
    <property type="term" value="C:host cell endomembrane system"/>
    <property type="evidence" value="ECO:0007669"/>
    <property type="project" value="UniProtKB-SubCell"/>
</dbReference>
<dbReference type="GO" id="GO:0016020">
    <property type="term" value="C:membrane"/>
    <property type="evidence" value="ECO:0007669"/>
    <property type="project" value="UniProtKB-KW"/>
</dbReference>
<dbReference type="GO" id="GO:0019031">
    <property type="term" value="C:viral envelope"/>
    <property type="evidence" value="ECO:0007669"/>
    <property type="project" value="UniProtKB-KW"/>
</dbReference>
<dbReference type="GO" id="GO:0055036">
    <property type="term" value="C:virion membrane"/>
    <property type="evidence" value="ECO:0007669"/>
    <property type="project" value="UniProtKB-SubCell"/>
</dbReference>
<dbReference type="GO" id="GO:0039660">
    <property type="term" value="F:structural constituent of virion"/>
    <property type="evidence" value="ECO:0007669"/>
    <property type="project" value="UniProtKB-KW"/>
</dbReference>
<dbReference type="GO" id="GO:0039702">
    <property type="term" value="P:viral budding via host ESCRT complex"/>
    <property type="evidence" value="ECO:0007669"/>
    <property type="project" value="UniProtKB-KW"/>
</dbReference>
<dbReference type="FunFam" id="3.10.460.20:FF:000001">
    <property type="entry name" value="Matrix protein"/>
    <property type="match status" value="1"/>
</dbReference>
<dbReference type="Gene3D" id="3.10.460.20">
    <property type="entry name" value="Rhabdovirus matrix protein M2"/>
    <property type="match status" value="1"/>
</dbReference>
<dbReference type="InterPro" id="IPR006870">
    <property type="entry name" value="Rhabdo_M"/>
</dbReference>
<dbReference type="InterPro" id="IPR038617">
    <property type="entry name" value="Rhabdovirus_M_sf"/>
</dbReference>
<dbReference type="Pfam" id="PF04785">
    <property type="entry name" value="Rhabdo_M2"/>
    <property type="match status" value="1"/>
</dbReference>
<evidence type="ECO:0000250" key="1"/>
<evidence type="ECO:0000250" key="2">
    <source>
        <dbReference type="UniProtKB" id="P16287"/>
    </source>
</evidence>
<evidence type="ECO:0000250" key="3">
    <source>
        <dbReference type="UniProtKB" id="P25224"/>
    </source>
</evidence>
<evidence type="ECO:0000255" key="4"/>
<evidence type="ECO:0000305" key="5"/>
<sequence>MNVLRKIVKKCRDEDTQKPSPVSAPPYDDDLWLPPPEYVPLKELTSKKNMRNFCVNGEVKACSPNGYSFRILRHILRSFNEIYSGNHRMVGLVKVVVGLALSGAPVPEGMNWVYKLRRTLIFQWADSRGPLEGEELEYSQEITWDDDTEFVGLQIRVSARQCHIQGRIWCINTNSRACQLWSDMSLQTQRSEEDKDSSLLLE</sequence>
<reference key="1">
    <citation type="submission" date="2006-08" db="EMBL/GenBank/DDBJ databases">
        <authorList>
            <person name="Zhao Y.J."/>
            <person name="Guo L."/>
            <person name="Huang Y."/>
            <person name="Qian A.D."/>
        </authorList>
    </citation>
    <scope>NUCLEOTIDE SEQUENCE [GENOMIC RNA]</scope>
</reference>
<accession>Q0GBY2</accession>
<feature type="chain" id="PRO_0000295577" description="Matrix protein">
    <location>
        <begin position="1"/>
        <end position="202"/>
    </location>
</feature>
<feature type="region of interest" description="Essential for glycoprotein binding" evidence="1">
    <location>
        <begin position="115"/>
        <end position="151"/>
    </location>
</feature>
<feature type="short sequence motif" description="PPXY motif" evidence="4">
    <location>
        <begin position="35"/>
        <end position="38"/>
    </location>
</feature>
<feature type="site" description="Involved in the inhibition of stress granules formation and contributes therefore to virulence" evidence="3">
    <location>
        <position position="95"/>
    </location>
</feature>
<organismHost>
    <name type="scientific">Homo sapiens</name>
    <name type="common">Human</name>
    <dbReference type="NCBI Taxonomy" id="9606"/>
</organismHost>
<organismHost>
    <name type="scientific">Mammalia</name>
    <dbReference type="NCBI Taxonomy" id="40674"/>
</organismHost>
<protein>
    <recommendedName>
        <fullName>Matrix protein</fullName>
    </recommendedName>
    <alternativeName>
        <fullName>Phosphoprotein M2</fullName>
    </alternativeName>
</protein>
<organism>
    <name type="scientific">Rabies virus (strain China/MRV)</name>
    <name type="common">RABV</name>
    <dbReference type="NCBI Taxonomy" id="445791"/>
    <lineage>
        <taxon>Viruses</taxon>
        <taxon>Riboviria</taxon>
        <taxon>Orthornavirae</taxon>
        <taxon>Negarnaviricota</taxon>
        <taxon>Haploviricotina</taxon>
        <taxon>Monjiviricetes</taxon>
        <taxon>Mononegavirales</taxon>
        <taxon>Rhabdoviridae</taxon>
        <taxon>Alpharhabdovirinae</taxon>
        <taxon>Lyssavirus</taxon>
        <taxon>Lyssavirus rabies</taxon>
    </lineage>
</organism>
<proteinExistence type="inferred from homology"/>
<name>MATRX_RABVR</name>
<keyword id="KW-1035">Host cytoplasm</keyword>
<keyword id="KW-1043">Host membrane</keyword>
<keyword id="KW-0945">Host-virus interaction</keyword>
<keyword id="KW-0472">Membrane</keyword>
<keyword id="KW-0597">Phosphoprotein</keyword>
<keyword id="KW-1198">Viral budding</keyword>
<keyword id="KW-1187">Viral budding via the host ESCRT complexes</keyword>
<keyword id="KW-0261">Viral envelope protein</keyword>
<keyword id="KW-0468">Viral matrix protein</keyword>
<keyword id="KW-1188">Viral release from host cell</keyword>
<keyword id="KW-0946">Virion</keyword>